<evidence type="ECO:0000250" key="1">
    <source>
        <dbReference type="UniProtKB" id="P01426"/>
    </source>
</evidence>
<evidence type="ECO:0000269" key="2">
    <source>
    </source>
</evidence>
<evidence type="ECO:0000303" key="3">
    <source>
    </source>
</evidence>
<evidence type="ECO:0000305" key="4"/>
<reference key="1">
    <citation type="journal article" date="2008" name="Proteomics">
        <title>Proteomic analysis of the venom from the fish eating coral snake Micrurus surinamensis: novel toxins, their function and phylogeny.</title>
        <authorList>
            <person name="Olamendi-Portugal T."/>
            <person name="Batista C.V.F."/>
            <person name="Restano-Cassulini R."/>
            <person name="Pando V."/>
            <person name="Villa-Hernandez O."/>
            <person name="Zavaleta-Martinez-Vargas A."/>
            <person name="Salas-Arruz M.C."/>
            <person name="Rodriguez de la Vega R.C."/>
            <person name="Becerril B."/>
            <person name="Possani L.D."/>
        </authorList>
    </citation>
    <scope>PROTEIN SEQUENCE</scope>
    <scope>FUNCTION</scope>
    <scope>SUBCELLULAR LOCATION</scope>
    <source>
        <tissue>Venom</tissue>
    </source>
</reference>
<comment type="function">
    <text evidence="2">Produces peripheral paralysis by blocking neuromuscular transmission at the postsynaptic site. Binds to and inhibits the endogenous nicotinic acetylcholine receptors (nAChR) in human rhabdomyosarcoma TE 671 cell line with an IC(50) of 48.2 mM. This neurotoxin is lethal to mice by intraperitoneal injection and to zebrafish by injection at the back of the dorsolateral region.</text>
</comment>
<comment type="subcellular location">
    <subcellularLocation>
        <location evidence="2">Secreted</location>
    </subcellularLocation>
</comment>
<comment type="tissue specificity">
    <text evidence="4">Expressed by the venom gland.</text>
</comment>
<comment type="similarity">
    <text evidence="4">Belongs to the three-finger toxin family. Short-chain subfamily. Type I alpha-neurotoxin sub-subfamily.</text>
</comment>
<proteinExistence type="evidence at protein level"/>
<accession>P86095</accession>
<keyword id="KW-0008">Acetylcholine receptor inhibiting toxin</keyword>
<keyword id="KW-0903">Direct protein sequencing</keyword>
<keyword id="KW-1015">Disulfide bond</keyword>
<keyword id="KW-0872">Ion channel impairing toxin</keyword>
<keyword id="KW-0528">Neurotoxin</keyword>
<keyword id="KW-0629">Postsynaptic neurotoxin</keyword>
<keyword id="KW-0964">Secreted</keyword>
<keyword id="KW-0800">Toxin</keyword>
<dbReference type="SMR" id="P86095"/>
<dbReference type="GO" id="GO:0005576">
    <property type="term" value="C:extracellular region"/>
    <property type="evidence" value="ECO:0000314"/>
    <property type="project" value="UniProtKB"/>
</dbReference>
<dbReference type="GO" id="GO:0030550">
    <property type="term" value="F:acetylcholine receptor inhibitor activity"/>
    <property type="evidence" value="ECO:0000314"/>
    <property type="project" value="UniProtKB"/>
</dbReference>
<dbReference type="GO" id="GO:0099106">
    <property type="term" value="F:ion channel regulator activity"/>
    <property type="evidence" value="ECO:0007669"/>
    <property type="project" value="UniProtKB-KW"/>
</dbReference>
<dbReference type="GO" id="GO:0090729">
    <property type="term" value="F:toxin activity"/>
    <property type="evidence" value="ECO:0000314"/>
    <property type="project" value="UniProtKB"/>
</dbReference>
<dbReference type="GO" id="GO:0044504">
    <property type="term" value="P:modulation of receptor activity in another organism"/>
    <property type="evidence" value="ECO:0000314"/>
    <property type="project" value="UniProtKB"/>
</dbReference>
<dbReference type="CDD" id="cd00206">
    <property type="entry name" value="TFP_snake_toxin"/>
    <property type="match status" value="1"/>
</dbReference>
<dbReference type="FunFam" id="2.10.60.10:FF:000024">
    <property type="entry name" value="Cytotoxin 1"/>
    <property type="match status" value="1"/>
</dbReference>
<dbReference type="Gene3D" id="2.10.60.10">
    <property type="entry name" value="CD59"/>
    <property type="match status" value="1"/>
</dbReference>
<dbReference type="InterPro" id="IPR003571">
    <property type="entry name" value="Snake_3FTx"/>
</dbReference>
<dbReference type="InterPro" id="IPR045860">
    <property type="entry name" value="Snake_toxin-like_sf"/>
</dbReference>
<dbReference type="InterPro" id="IPR018354">
    <property type="entry name" value="Snake_toxin_con_site"/>
</dbReference>
<dbReference type="InterPro" id="IPR054131">
    <property type="entry name" value="Toxin_cobra-type"/>
</dbReference>
<dbReference type="Pfam" id="PF21947">
    <property type="entry name" value="Toxin_cobra-type"/>
    <property type="match status" value="1"/>
</dbReference>
<dbReference type="SUPFAM" id="SSF57302">
    <property type="entry name" value="Snake toxin-like"/>
    <property type="match status" value="1"/>
</dbReference>
<dbReference type="PROSITE" id="PS00272">
    <property type="entry name" value="SNAKE_TOXIN"/>
    <property type="match status" value="1"/>
</dbReference>
<name>3S11_MICSU</name>
<organism>
    <name type="scientific">Micrurus surinamensis</name>
    <name type="common">Surinam coral snake</name>
    <dbReference type="NCBI Taxonomy" id="129470"/>
    <lineage>
        <taxon>Eukaryota</taxon>
        <taxon>Metazoa</taxon>
        <taxon>Chordata</taxon>
        <taxon>Craniata</taxon>
        <taxon>Vertebrata</taxon>
        <taxon>Euteleostomi</taxon>
        <taxon>Lepidosauria</taxon>
        <taxon>Squamata</taxon>
        <taxon>Bifurcata</taxon>
        <taxon>Unidentata</taxon>
        <taxon>Episquamata</taxon>
        <taxon>Toxicofera</taxon>
        <taxon>Serpentes</taxon>
        <taxon>Colubroidea</taxon>
        <taxon>Elapidae</taxon>
        <taxon>Elapinae</taxon>
        <taxon>Micrurus</taxon>
    </lineage>
</organism>
<sequence length="59" mass="6560">MICYNQQSTEPPTTKTCSEGQCYKKTWSDHRGTIIERGCACPNVKPGVKISCCSSDKCR</sequence>
<protein>
    <recommendedName>
        <fullName evidence="4">Three-finger toxin MS1</fullName>
    </recommendedName>
    <alternativeName>
        <fullName evidence="3">Short neurotoxin MS1</fullName>
    </alternativeName>
</protein>
<feature type="chain" id="PRO_0000371722" description="Three-finger toxin MS1" evidence="2">
    <location>
        <begin position="1"/>
        <end position="59"/>
    </location>
</feature>
<feature type="disulfide bond" evidence="1">
    <location>
        <begin position="3"/>
        <end position="22"/>
    </location>
</feature>
<feature type="disulfide bond" evidence="1">
    <location>
        <begin position="17"/>
        <end position="39"/>
    </location>
</feature>
<feature type="disulfide bond" evidence="1">
    <location>
        <begin position="41"/>
        <end position="52"/>
    </location>
</feature>
<feature type="disulfide bond" evidence="1">
    <location>
        <begin position="53"/>
        <end position="58"/>
    </location>
</feature>